<sequence>MADVPGAQRPVPGGGPEPRDPLDCWACAVLVTAQNLLVAAFNLLLLALVLGTILLPAVTMLGFGFLCHSQFLRSQAPPCTAHLRDPGFTALLVTGFLLLVPLLVLALASYRRLCLRLRLADCLVPYSRALYRRRRNPQPRPARSSPGPQVAPTSGKVWV</sequence>
<protein>
    <recommendedName>
        <fullName>Transmembrane protein 88</fullName>
    </recommendedName>
</protein>
<evidence type="ECO:0000250" key="1"/>
<evidence type="ECO:0000255" key="2"/>
<evidence type="ECO:0000256" key="3">
    <source>
        <dbReference type="SAM" id="MobiDB-lite"/>
    </source>
</evidence>
<evidence type="ECO:0000305" key="4"/>
<keyword id="KW-1003">Cell membrane</keyword>
<keyword id="KW-0217">Developmental protein</keyword>
<keyword id="KW-0472">Membrane</keyword>
<keyword id="KW-1185">Reference proteome</keyword>
<keyword id="KW-0812">Transmembrane</keyword>
<keyword id="KW-1133">Transmembrane helix</keyword>
<keyword id="KW-0879">Wnt signaling pathway</keyword>
<proteinExistence type="evidence at transcript level"/>
<organism>
    <name type="scientific">Bos taurus</name>
    <name type="common">Bovine</name>
    <dbReference type="NCBI Taxonomy" id="9913"/>
    <lineage>
        <taxon>Eukaryota</taxon>
        <taxon>Metazoa</taxon>
        <taxon>Chordata</taxon>
        <taxon>Craniata</taxon>
        <taxon>Vertebrata</taxon>
        <taxon>Euteleostomi</taxon>
        <taxon>Mammalia</taxon>
        <taxon>Eutheria</taxon>
        <taxon>Laurasiatheria</taxon>
        <taxon>Artiodactyla</taxon>
        <taxon>Ruminantia</taxon>
        <taxon>Pecora</taxon>
        <taxon>Bovidae</taxon>
        <taxon>Bovinae</taxon>
        <taxon>Bos</taxon>
    </lineage>
</organism>
<reference key="1">
    <citation type="submission" date="2007-04" db="EMBL/GenBank/DDBJ databases">
        <authorList>
            <consortium name="NIH - Mammalian Gene Collection (MGC) project"/>
        </authorList>
    </citation>
    <scope>NUCLEOTIDE SEQUENCE [LARGE SCALE MRNA]</scope>
    <source>
        <strain>Hereford</strain>
        <tissue>Fetal pons</tissue>
    </source>
</reference>
<feature type="chain" id="PRO_0000346448" description="Transmembrane protein 88">
    <location>
        <begin position="1"/>
        <end position="159"/>
    </location>
</feature>
<feature type="transmembrane region" description="Helical" evidence="2">
    <location>
        <begin position="43"/>
        <end position="63"/>
    </location>
</feature>
<feature type="transmembrane region" description="Helical" evidence="2">
    <location>
        <begin position="88"/>
        <end position="108"/>
    </location>
</feature>
<feature type="region of interest" description="Disordered" evidence="3">
    <location>
        <begin position="135"/>
        <end position="159"/>
    </location>
</feature>
<dbReference type="EMBL" id="BC140617">
    <property type="protein sequence ID" value="AAI40618.1"/>
    <property type="molecule type" value="mRNA"/>
</dbReference>
<dbReference type="RefSeq" id="NP_001091848.1">
    <property type="nucleotide sequence ID" value="NM_001098378.2"/>
</dbReference>
<dbReference type="SMR" id="A5D7M7"/>
<dbReference type="FunCoup" id="A5D7M7">
    <property type="interactions" value="123"/>
</dbReference>
<dbReference type="STRING" id="9913.ENSBTAP00000019555"/>
<dbReference type="PaxDb" id="9913-ENSBTAP00000019555"/>
<dbReference type="GeneID" id="507172"/>
<dbReference type="KEGG" id="bta:507172"/>
<dbReference type="CTD" id="92162"/>
<dbReference type="VEuPathDB" id="HostDB:ENSBTAG00000014693"/>
<dbReference type="eggNOG" id="ENOG502S52P">
    <property type="taxonomic scope" value="Eukaryota"/>
</dbReference>
<dbReference type="HOGENOM" id="CLU_105667_1_0_1"/>
<dbReference type="InParanoid" id="A5D7M7"/>
<dbReference type="OMA" id="CTAHFQD"/>
<dbReference type="OrthoDB" id="9948320at2759"/>
<dbReference type="TreeFam" id="TF332743"/>
<dbReference type="Proteomes" id="UP000009136">
    <property type="component" value="Chromosome 19"/>
</dbReference>
<dbReference type="Bgee" id="ENSBTAG00000014693">
    <property type="expression patterns" value="Expressed in tongue muscle and 103 other cell types or tissues"/>
</dbReference>
<dbReference type="GO" id="GO:0005886">
    <property type="term" value="C:plasma membrane"/>
    <property type="evidence" value="ECO:0000318"/>
    <property type="project" value="GO_Central"/>
</dbReference>
<dbReference type="GO" id="GO:0090090">
    <property type="term" value="P:negative regulation of canonical Wnt signaling pathway"/>
    <property type="evidence" value="ECO:0000318"/>
    <property type="project" value="GO_Central"/>
</dbReference>
<dbReference type="GO" id="GO:0016055">
    <property type="term" value="P:Wnt signaling pathway"/>
    <property type="evidence" value="ECO:0007669"/>
    <property type="project" value="UniProtKB-KW"/>
</dbReference>
<dbReference type="InterPro" id="IPR033355">
    <property type="entry name" value="TMEM88"/>
</dbReference>
<dbReference type="PANTHER" id="PTHR28628:SF3">
    <property type="entry name" value="TRANSMEMBRANE PROTEIN 88"/>
    <property type="match status" value="1"/>
</dbReference>
<dbReference type="PANTHER" id="PTHR28628">
    <property type="entry name" value="TRANSMEMBRANE PROTEIN 88-RELATED"/>
    <property type="match status" value="1"/>
</dbReference>
<comment type="function">
    <text evidence="1">Inhibits the Wnt/beta-catenin signaling pathway. Crucial for heart development and acts downstream of GATA factors in the pre-cardiac mesoderm to specify lineage commitment of cardiomyocyte development (By similarity).</text>
</comment>
<comment type="subunit">
    <text evidence="1">Interacts (via C-terminus) with DVL1.</text>
</comment>
<comment type="subcellular location">
    <subcellularLocation>
        <location evidence="1">Cell membrane</location>
        <topology>Multi-pass membrane protein</topology>
    </subcellularLocation>
</comment>
<comment type="similarity">
    <text evidence="4">Belongs to the TMEM88 family.</text>
</comment>
<accession>A5D7M7</accession>
<gene>
    <name type="primary">TMEM88</name>
</gene>
<name>TMM88_BOVIN</name>